<accession>B4UIA9</accession>
<sequence>MSEAKGVGGIDPRATPGSAGAGERPPMGTLSPRAGEGELYAPMPSKHMVINLGPSHPAMHGVTRAVVELNGEIIEGMKLDIGFLHRGFEKSCENVTWGQVFPYTDRLNYVSSIMNNVGFALAVEKLAKLEIPERARYLRVITSEIHRICDHLTLVGAMAMELGAMTVFLYGIEARDLLWDRLAELCGARLTSNYARIGGVARDIPEGWQEKTLKVLDRVVAIREEIGQLLNRNRIFIDRCLNTGKVSREDALELGFTGPCLRASGEPYDVRKAAPYLVYDRLDFDIPVGSNGDNFDRYLMRMEEMRQSDKIIRQCFEQMAPGEIIVQDFRYALPPKPLVYGTIEGVMAHFKLVMEGIKVPAGEVYSYTEAANGELGFYVVSDGGGRPYKLGLRAPGWPMLAALPVMTKGSLLSDLIPTFDSINMIGGEVEQ</sequence>
<comment type="function">
    <text evidence="1">NDH-1 shuttles electrons from NADH, via FMN and iron-sulfur (Fe-S) centers, to quinones in the respiratory chain. The immediate electron acceptor for the enzyme in this species is believed to be ubiquinone. Couples the redox reaction to proton translocation (for every two electrons transferred, four hydrogen ions are translocated across the cytoplasmic membrane), and thus conserves the redox energy in a proton gradient.</text>
</comment>
<comment type="catalytic activity">
    <reaction evidence="1">
        <text>a quinone + NADH + 5 H(+)(in) = a quinol + NAD(+) + 4 H(+)(out)</text>
        <dbReference type="Rhea" id="RHEA:57888"/>
        <dbReference type="ChEBI" id="CHEBI:15378"/>
        <dbReference type="ChEBI" id="CHEBI:24646"/>
        <dbReference type="ChEBI" id="CHEBI:57540"/>
        <dbReference type="ChEBI" id="CHEBI:57945"/>
        <dbReference type="ChEBI" id="CHEBI:132124"/>
    </reaction>
</comment>
<comment type="subunit">
    <text evidence="1">NDH-1 is composed of 14 different subunits. Subunits NuoB, C, D, E, F, and G constitute the peripheral sector of the complex.</text>
</comment>
<comment type="subcellular location">
    <subcellularLocation>
        <location evidence="1">Cell inner membrane</location>
        <topology evidence="1">Peripheral membrane protein</topology>
        <orientation evidence="1">Cytoplasmic side</orientation>
    </subcellularLocation>
</comment>
<comment type="similarity">
    <text evidence="1">Belongs to the complex I 49 kDa subunit family.</text>
</comment>
<organism>
    <name type="scientific">Anaeromyxobacter sp. (strain K)</name>
    <dbReference type="NCBI Taxonomy" id="447217"/>
    <lineage>
        <taxon>Bacteria</taxon>
        <taxon>Pseudomonadati</taxon>
        <taxon>Myxococcota</taxon>
        <taxon>Myxococcia</taxon>
        <taxon>Myxococcales</taxon>
        <taxon>Cystobacterineae</taxon>
        <taxon>Anaeromyxobacteraceae</taxon>
        <taxon>Anaeromyxobacter</taxon>
    </lineage>
</organism>
<protein>
    <recommendedName>
        <fullName evidence="1">NADH-quinone oxidoreductase subunit D 2</fullName>
        <ecNumber evidence="1">7.1.1.-</ecNumber>
    </recommendedName>
    <alternativeName>
        <fullName evidence="1">NADH dehydrogenase I subunit D 2</fullName>
    </alternativeName>
    <alternativeName>
        <fullName evidence="1">NDH-1 subunit D 2</fullName>
    </alternativeName>
</protein>
<dbReference type="EC" id="7.1.1.-" evidence="1"/>
<dbReference type="EMBL" id="CP001131">
    <property type="protein sequence ID" value="ACG72514.1"/>
    <property type="molecule type" value="Genomic_DNA"/>
</dbReference>
<dbReference type="RefSeq" id="WP_012525338.1">
    <property type="nucleotide sequence ID" value="NC_011145.1"/>
</dbReference>
<dbReference type="SMR" id="B4UIA9"/>
<dbReference type="KEGG" id="ank:AnaeK_1281"/>
<dbReference type="HOGENOM" id="CLU_015134_1_2_7"/>
<dbReference type="OrthoDB" id="9801496at2"/>
<dbReference type="Proteomes" id="UP000001871">
    <property type="component" value="Chromosome"/>
</dbReference>
<dbReference type="GO" id="GO:0005886">
    <property type="term" value="C:plasma membrane"/>
    <property type="evidence" value="ECO:0007669"/>
    <property type="project" value="UniProtKB-SubCell"/>
</dbReference>
<dbReference type="GO" id="GO:0051287">
    <property type="term" value="F:NAD binding"/>
    <property type="evidence" value="ECO:0007669"/>
    <property type="project" value="InterPro"/>
</dbReference>
<dbReference type="GO" id="GO:0050136">
    <property type="term" value="F:NADH:ubiquinone reductase (non-electrogenic) activity"/>
    <property type="evidence" value="ECO:0007669"/>
    <property type="project" value="UniProtKB-UniRule"/>
</dbReference>
<dbReference type="GO" id="GO:0048038">
    <property type="term" value="F:quinone binding"/>
    <property type="evidence" value="ECO:0007669"/>
    <property type="project" value="UniProtKB-KW"/>
</dbReference>
<dbReference type="Gene3D" id="1.10.645.10">
    <property type="entry name" value="Cytochrome-c3 Hydrogenase, chain B"/>
    <property type="match status" value="1"/>
</dbReference>
<dbReference type="HAMAP" id="MF_01358">
    <property type="entry name" value="NDH1_NuoD"/>
    <property type="match status" value="1"/>
</dbReference>
<dbReference type="InterPro" id="IPR001135">
    <property type="entry name" value="NADH_Q_OxRdtase_suD"/>
</dbReference>
<dbReference type="InterPro" id="IPR022885">
    <property type="entry name" value="NDH1_su_D/H"/>
</dbReference>
<dbReference type="InterPro" id="IPR029014">
    <property type="entry name" value="NiFe-Hase_large"/>
</dbReference>
<dbReference type="NCBIfam" id="TIGR01962">
    <property type="entry name" value="NuoD"/>
    <property type="match status" value="1"/>
</dbReference>
<dbReference type="NCBIfam" id="NF004739">
    <property type="entry name" value="PRK06075.1"/>
    <property type="match status" value="1"/>
</dbReference>
<dbReference type="PANTHER" id="PTHR11993:SF10">
    <property type="entry name" value="NADH DEHYDROGENASE [UBIQUINONE] IRON-SULFUR PROTEIN 2, MITOCHONDRIAL"/>
    <property type="match status" value="1"/>
</dbReference>
<dbReference type="PANTHER" id="PTHR11993">
    <property type="entry name" value="NADH-UBIQUINONE OXIDOREDUCTASE 49 KDA SUBUNIT"/>
    <property type="match status" value="1"/>
</dbReference>
<dbReference type="Pfam" id="PF00346">
    <property type="entry name" value="Complex1_49kDa"/>
    <property type="match status" value="1"/>
</dbReference>
<dbReference type="SUPFAM" id="SSF56762">
    <property type="entry name" value="HydB/Nqo4-like"/>
    <property type="match status" value="1"/>
</dbReference>
<reference key="1">
    <citation type="submission" date="2008-08" db="EMBL/GenBank/DDBJ databases">
        <title>Complete sequence of Anaeromyxobacter sp. K.</title>
        <authorList>
            <consortium name="US DOE Joint Genome Institute"/>
            <person name="Lucas S."/>
            <person name="Copeland A."/>
            <person name="Lapidus A."/>
            <person name="Glavina del Rio T."/>
            <person name="Dalin E."/>
            <person name="Tice H."/>
            <person name="Bruce D."/>
            <person name="Goodwin L."/>
            <person name="Pitluck S."/>
            <person name="Saunders E."/>
            <person name="Brettin T."/>
            <person name="Detter J.C."/>
            <person name="Han C."/>
            <person name="Larimer F."/>
            <person name="Land M."/>
            <person name="Hauser L."/>
            <person name="Kyrpides N."/>
            <person name="Ovchinnikiva G."/>
            <person name="Beliaev A."/>
        </authorList>
    </citation>
    <scope>NUCLEOTIDE SEQUENCE [LARGE SCALE GENOMIC DNA]</scope>
    <source>
        <strain>K</strain>
    </source>
</reference>
<feature type="chain" id="PRO_0000371818" description="NADH-quinone oxidoreductase subunit D 2">
    <location>
        <begin position="1"/>
        <end position="431"/>
    </location>
</feature>
<feature type="region of interest" description="Disordered" evidence="2">
    <location>
        <begin position="1"/>
        <end position="37"/>
    </location>
</feature>
<proteinExistence type="inferred from homology"/>
<keyword id="KW-0997">Cell inner membrane</keyword>
<keyword id="KW-1003">Cell membrane</keyword>
<keyword id="KW-0472">Membrane</keyword>
<keyword id="KW-0520">NAD</keyword>
<keyword id="KW-0874">Quinone</keyword>
<keyword id="KW-1278">Translocase</keyword>
<keyword id="KW-0813">Transport</keyword>
<keyword id="KW-0830">Ubiquinone</keyword>
<gene>
    <name evidence="1" type="primary">nuoD2</name>
    <name type="ordered locus">AnaeK_1281</name>
</gene>
<name>NUOD2_ANASK</name>
<evidence type="ECO:0000255" key="1">
    <source>
        <dbReference type="HAMAP-Rule" id="MF_01358"/>
    </source>
</evidence>
<evidence type="ECO:0000256" key="2">
    <source>
        <dbReference type="SAM" id="MobiDB-lite"/>
    </source>
</evidence>